<name>RRF_BURO1</name>
<organism>
    <name type="scientific">Burkholderia orbicola (strain AU 1054)</name>
    <dbReference type="NCBI Taxonomy" id="331271"/>
    <lineage>
        <taxon>Bacteria</taxon>
        <taxon>Pseudomonadati</taxon>
        <taxon>Pseudomonadota</taxon>
        <taxon>Betaproteobacteria</taxon>
        <taxon>Burkholderiales</taxon>
        <taxon>Burkholderiaceae</taxon>
        <taxon>Burkholderia</taxon>
        <taxon>Burkholderia cepacia complex</taxon>
        <taxon>Burkholderia orbicola</taxon>
    </lineage>
</organism>
<keyword id="KW-0963">Cytoplasm</keyword>
<keyword id="KW-0648">Protein biosynthesis</keyword>
<dbReference type="EMBL" id="CP000380">
    <property type="protein sequence ID" value="ABF80926.1"/>
    <property type="molecule type" value="Genomic_DNA"/>
</dbReference>
<dbReference type="SMR" id="Q1BHH9"/>
<dbReference type="HOGENOM" id="CLU_073981_2_1_4"/>
<dbReference type="GO" id="GO:0005829">
    <property type="term" value="C:cytosol"/>
    <property type="evidence" value="ECO:0007669"/>
    <property type="project" value="GOC"/>
</dbReference>
<dbReference type="GO" id="GO:0043023">
    <property type="term" value="F:ribosomal large subunit binding"/>
    <property type="evidence" value="ECO:0007669"/>
    <property type="project" value="TreeGrafter"/>
</dbReference>
<dbReference type="GO" id="GO:0002184">
    <property type="term" value="P:cytoplasmic translational termination"/>
    <property type="evidence" value="ECO:0007669"/>
    <property type="project" value="TreeGrafter"/>
</dbReference>
<dbReference type="CDD" id="cd00520">
    <property type="entry name" value="RRF"/>
    <property type="match status" value="1"/>
</dbReference>
<dbReference type="FunFam" id="1.10.132.20:FF:000001">
    <property type="entry name" value="Ribosome-recycling factor"/>
    <property type="match status" value="1"/>
</dbReference>
<dbReference type="FunFam" id="3.30.1360.40:FF:000001">
    <property type="entry name" value="Ribosome-recycling factor"/>
    <property type="match status" value="1"/>
</dbReference>
<dbReference type="Gene3D" id="3.30.1360.40">
    <property type="match status" value="1"/>
</dbReference>
<dbReference type="Gene3D" id="1.10.132.20">
    <property type="entry name" value="Ribosome-recycling factor"/>
    <property type="match status" value="1"/>
</dbReference>
<dbReference type="HAMAP" id="MF_00040">
    <property type="entry name" value="RRF"/>
    <property type="match status" value="1"/>
</dbReference>
<dbReference type="InterPro" id="IPR002661">
    <property type="entry name" value="Ribosome_recyc_fac"/>
</dbReference>
<dbReference type="InterPro" id="IPR023584">
    <property type="entry name" value="Ribosome_recyc_fac_dom"/>
</dbReference>
<dbReference type="InterPro" id="IPR036191">
    <property type="entry name" value="RRF_sf"/>
</dbReference>
<dbReference type="NCBIfam" id="TIGR00496">
    <property type="entry name" value="frr"/>
    <property type="match status" value="1"/>
</dbReference>
<dbReference type="PANTHER" id="PTHR20982:SF3">
    <property type="entry name" value="MITOCHONDRIAL RIBOSOME RECYCLING FACTOR PSEUDO 1"/>
    <property type="match status" value="1"/>
</dbReference>
<dbReference type="PANTHER" id="PTHR20982">
    <property type="entry name" value="RIBOSOME RECYCLING FACTOR"/>
    <property type="match status" value="1"/>
</dbReference>
<dbReference type="Pfam" id="PF01765">
    <property type="entry name" value="RRF"/>
    <property type="match status" value="1"/>
</dbReference>
<dbReference type="SUPFAM" id="SSF55194">
    <property type="entry name" value="Ribosome recycling factor, RRF"/>
    <property type="match status" value="1"/>
</dbReference>
<comment type="function">
    <text evidence="1">Responsible for the release of ribosomes from messenger RNA at the termination of protein biosynthesis. May increase the efficiency of translation by recycling ribosomes from one round of translation to another.</text>
</comment>
<comment type="subcellular location">
    <subcellularLocation>
        <location evidence="1">Cytoplasm</location>
    </subcellularLocation>
</comment>
<comment type="similarity">
    <text evidence="1">Belongs to the RRF family.</text>
</comment>
<protein>
    <recommendedName>
        <fullName evidence="1">Ribosome-recycling factor</fullName>
        <shortName evidence="1">RRF</shortName>
    </recommendedName>
    <alternativeName>
        <fullName evidence="1">Ribosome-releasing factor</fullName>
    </alternativeName>
</protein>
<reference key="1">
    <citation type="submission" date="2006-05" db="EMBL/GenBank/DDBJ databases">
        <title>Complete sequence of chromosome 3 of Burkholderia cenocepacia AU 1054.</title>
        <authorList>
            <consortium name="US DOE Joint Genome Institute"/>
            <person name="Copeland A."/>
            <person name="Lucas S."/>
            <person name="Lapidus A."/>
            <person name="Barry K."/>
            <person name="Detter J.C."/>
            <person name="Glavina del Rio T."/>
            <person name="Hammon N."/>
            <person name="Israni S."/>
            <person name="Dalin E."/>
            <person name="Tice H."/>
            <person name="Pitluck S."/>
            <person name="Chain P."/>
            <person name="Malfatti S."/>
            <person name="Shin M."/>
            <person name="Vergez L."/>
            <person name="Schmutz J."/>
            <person name="Larimer F."/>
            <person name="Land M."/>
            <person name="Hauser L."/>
            <person name="Kyrpides N."/>
            <person name="Lykidis A."/>
            <person name="LiPuma J.J."/>
            <person name="Konstantinidis K."/>
            <person name="Tiedje J.M."/>
            <person name="Richardson P."/>
        </authorList>
    </citation>
    <scope>NUCLEOTIDE SEQUENCE [LARGE SCALE GENOMIC DNA]</scope>
    <source>
        <strain>AU 1054</strain>
    </source>
</reference>
<accession>Q1BHH9</accession>
<evidence type="ECO:0000255" key="1">
    <source>
        <dbReference type="HAMAP-Rule" id="MF_00040"/>
    </source>
</evidence>
<sequence>MSVADVKKGVEQKMQRSIEAFKNDLAKIRTGRAHTGLLDHVQVDYYGSMVPISQVANLTLVDARTIGVQPWEKNMVAKVEKAIREADLGLNPATTGDLIRVPMPALTEERRRELTKVVKSEGETAKVAIRNLRRDANEALKKLVKDKEISEDDERRASDDVQKLTDKHVAEIDKLVQTKEAEIMTV</sequence>
<gene>
    <name evidence="1" type="primary">frr</name>
    <name type="ordered locus">Bcen_6061</name>
</gene>
<proteinExistence type="inferred from homology"/>
<feature type="chain" id="PRO_1000003115" description="Ribosome-recycling factor">
    <location>
        <begin position="1"/>
        <end position="186"/>
    </location>
</feature>